<comment type="function">
    <text evidence="2">Component of the cytochrome b6-f complex, which mediates electron transfer between photosystem II (PSII) and photosystem I (PSI), cyclic electron flow around PSI, and state transitions.</text>
</comment>
<comment type="subunit">
    <text evidence="1">The 4 large subunits of the cytochrome b6-f complex are cytochrome b6, subunit IV (17 kDa polypeptide, petD), cytochrome f and the Rieske protein, while the 4 small subunits are petG, petL, petM and petN. The complex functions as a dimer (By similarity).</text>
</comment>
<comment type="subcellular location">
    <subcellularLocation>
        <location evidence="2">Plastid</location>
        <location evidence="2">Chloroplast thylakoid membrane</location>
        <topology evidence="2">Multi-pass membrane protein</topology>
    </subcellularLocation>
</comment>
<comment type="RNA editing">
    <location>
        <position position="16" evidence="3 4"/>
    </location>
    <location>
        <position position="30" evidence="3 4"/>
    </location>
    <location>
        <position position="36" evidence="3 4"/>
    </location>
    <location>
        <position position="37" evidence="3 4"/>
    </location>
    <location>
        <position position="38" evidence="3 4"/>
    </location>
    <location>
        <position position="40" evidence="3 4"/>
    </location>
    <location>
        <position position="41" evidence="3 4"/>
    </location>
    <location>
        <position position="72" evidence="3 4"/>
    </location>
    <location>
        <position position="85" evidence="3 4"/>
    </location>
    <location>
        <position position="86" evidence="3 4"/>
    </location>
    <location>
        <position position="88" evidence="3 4"/>
    </location>
    <location>
        <position position="89" evidence="3 4"/>
    </location>
    <location>
        <position position="105" evidence="3 4"/>
    </location>
    <location>
        <position position="117" evidence="3 4"/>
    </location>
    <location>
        <position position="121" evidence="3 4"/>
    </location>
    <location>
        <position position="123" evidence="3 4"/>
    </location>
    <location>
        <position position="134" evidence="3 4"/>
    </location>
    <location>
        <position position="161" evidence="3 4"/>
    </location>
    <text>The nonsense codons at positions 85 and 121 are modified to sense codons. The stop codon is created by RNA editing.</text>
</comment>
<comment type="similarity">
    <text evidence="2">Belongs to the cytochrome b family. PetD subfamily.</text>
</comment>
<proteinExistence type="evidence at transcript level"/>
<evidence type="ECO:0000250" key="1"/>
<evidence type="ECO:0000255" key="2">
    <source>
        <dbReference type="HAMAP-Rule" id="MF_01344"/>
    </source>
</evidence>
<evidence type="ECO:0000269" key="3">
    <source>
    </source>
</evidence>
<evidence type="ECO:0000269" key="4">
    <source>
    </source>
</evidence>
<reference key="1">
    <citation type="journal article" date="2003" name="Nucleic Acids Res.">
        <title>The complete nucleotide sequence of the hornwort (Anthoceros formosae) chloroplast genome: insight into the earliest land plants.</title>
        <authorList>
            <person name="Kugita M."/>
            <person name="Kaneko A."/>
            <person name="Yamamoto Y."/>
            <person name="Takeya Y."/>
            <person name="Matsumoto T."/>
            <person name="Yoshinaga K."/>
        </authorList>
    </citation>
    <scope>NUCLEOTIDE SEQUENCE [LARGE SCALE GENOMIC DNA]</scope>
    <scope>RNA EDITING</scope>
</reference>
<reference key="2">
    <citation type="journal article" date="2003" name="Nucleic Acids Res.">
        <title>RNA editing in hornwort chloroplasts makes more than half the genes functional.</title>
        <authorList>
            <person name="Kugita M."/>
            <person name="Yamamoto Y."/>
            <person name="Fujikawa T."/>
            <person name="Matsumoto T."/>
            <person name="Yoshinaga K."/>
        </authorList>
    </citation>
    <scope>NUCLEOTIDE SEQUENCE [MRNA]</scope>
    <scope>RNA EDITING</scope>
    <source>
        <tissue>Thallus</tissue>
    </source>
</reference>
<keyword id="KW-0150">Chloroplast</keyword>
<keyword id="KW-0249">Electron transport</keyword>
<keyword id="KW-0472">Membrane</keyword>
<keyword id="KW-0602">Photosynthesis</keyword>
<keyword id="KW-0934">Plastid</keyword>
<keyword id="KW-0691">RNA editing</keyword>
<keyword id="KW-0793">Thylakoid</keyword>
<keyword id="KW-0812">Transmembrane</keyword>
<keyword id="KW-1133">Transmembrane helix</keyword>
<keyword id="KW-0813">Transport</keyword>
<name>PETD_ANTAG</name>
<dbReference type="EMBL" id="AB086179">
    <property type="protein sequence ID" value="BAC55380.1"/>
    <property type="molecule type" value="Genomic_DNA"/>
</dbReference>
<dbReference type="EMBL" id="AB087465">
    <property type="protein sequence ID" value="BAC55477.1"/>
    <property type="molecule type" value="mRNA"/>
</dbReference>
<dbReference type="RefSeq" id="NP_777444.1">
    <property type="nucleotide sequence ID" value="NC_004543.1"/>
</dbReference>
<dbReference type="SMR" id="Q85AY5"/>
<dbReference type="GeneID" id="2553386"/>
<dbReference type="GO" id="GO:0009535">
    <property type="term" value="C:chloroplast thylakoid membrane"/>
    <property type="evidence" value="ECO:0007669"/>
    <property type="project" value="UniProtKB-SubCell"/>
</dbReference>
<dbReference type="GO" id="GO:0005739">
    <property type="term" value="C:mitochondrion"/>
    <property type="evidence" value="ECO:0007669"/>
    <property type="project" value="GOC"/>
</dbReference>
<dbReference type="GO" id="GO:0045158">
    <property type="term" value="F:electron transporter, transferring electrons within cytochrome b6/f complex of photosystem II activity"/>
    <property type="evidence" value="ECO:0007669"/>
    <property type="project" value="UniProtKB-UniRule"/>
</dbReference>
<dbReference type="GO" id="GO:0045156">
    <property type="term" value="F:electron transporter, transferring electrons within the cyclic electron transport pathway of photosynthesis activity"/>
    <property type="evidence" value="ECO:0007669"/>
    <property type="project" value="InterPro"/>
</dbReference>
<dbReference type="GO" id="GO:0008121">
    <property type="term" value="F:ubiquinol-cytochrome-c reductase activity"/>
    <property type="evidence" value="ECO:0007669"/>
    <property type="project" value="TreeGrafter"/>
</dbReference>
<dbReference type="GO" id="GO:0006122">
    <property type="term" value="P:mitochondrial electron transport, ubiquinol to cytochrome c"/>
    <property type="evidence" value="ECO:0007669"/>
    <property type="project" value="TreeGrafter"/>
</dbReference>
<dbReference type="GO" id="GO:0009767">
    <property type="term" value="P:photosynthetic electron transport chain"/>
    <property type="evidence" value="ECO:0007669"/>
    <property type="project" value="InterPro"/>
</dbReference>
<dbReference type="CDD" id="cd00290">
    <property type="entry name" value="cytochrome_b_C"/>
    <property type="match status" value="1"/>
</dbReference>
<dbReference type="FunFam" id="1.10.287.980:FF:000001">
    <property type="entry name" value="Cytochrome b6-f complex subunit 4"/>
    <property type="match status" value="1"/>
</dbReference>
<dbReference type="FunFam" id="1.20.5.510:FF:000002">
    <property type="entry name" value="Cytochrome b6-f complex subunit 4"/>
    <property type="match status" value="1"/>
</dbReference>
<dbReference type="Gene3D" id="1.10.287.980">
    <property type="entry name" value="plastocyanin oxidoreductase"/>
    <property type="match status" value="1"/>
</dbReference>
<dbReference type="Gene3D" id="1.20.5.510">
    <property type="entry name" value="Single helix bin"/>
    <property type="match status" value="1"/>
</dbReference>
<dbReference type="HAMAP" id="MF_01344">
    <property type="entry name" value="Cytb6_f_subIV"/>
    <property type="match status" value="1"/>
</dbReference>
<dbReference type="InterPro" id="IPR005798">
    <property type="entry name" value="Cyt_b/b6_C"/>
</dbReference>
<dbReference type="InterPro" id="IPR036150">
    <property type="entry name" value="Cyt_b/b6_C_sf"/>
</dbReference>
<dbReference type="InterPro" id="IPR005870">
    <property type="entry name" value="Cyt_b6/f_cplx_suIV"/>
</dbReference>
<dbReference type="InterPro" id="IPR048260">
    <property type="entry name" value="Cytochrome_b_C_euk/bac"/>
</dbReference>
<dbReference type="NCBIfam" id="TIGR01156">
    <property type="entry name" value="cytb6_f_IV"/>
    <property type="match status" value="1"/>
</dbReference>
<dbReference type="PANTHER" id="PTHR19271">
    <property type="entry name" value="CYTOCHROME B"/>
    <property type="match status" value="1"/>
</dbReference>
<dbReference type="PANTHER" id="PTHR19271:SF41">
    <property type="entry name" value="CYTOCHROME B_B6 C-TERMINAL REGION PROFILE DOMAIN-CONTAINING PROTEIN"/>
    <property type="match status" value="1"/>
</dbReference>
<dbReference type="Pfam" id="PF00032">
    <property type="entry name" value="Cytochrom_B_C"/>
    <property type="match status" value="1"/>
</dbReference>
<dbReference type="PIRSF" id="PIRSF000033">
    <property type="entry name" value="B6f_17K"/>
    <property type="match status" value="1"/>
</dbReference>
<dbReference type="SUPFAM" id="SSF81648">
    <property type="entry name" value="a domain/subunit of cytochrome bc1 complex (Ubiquinol-cytochrome c reductase)"/>
    <property type="match status" value="1"/>
</dbReference>
<dbReference type="PROSITE" id="PS51003">
    <property type="entry name" value="CYTB_CTER"/>
    <property type="match status" value="1"/>
</dbReference>
<accession>Q85AY5</accession>
<organism>
    <name type="scientific">Anthoceros angustus</name>
    <name type="common">Hornwort</name>
    <name type="synonym">Anthoceros formosae</name>
    <dbReference type="NCBI Taxonomy" id="48387"/>
    <lineage>
        <taxon>Eukaryota</taxon>
        <taxon>Viridiplantae</taxon>
        <taxon>Streptophyta</taxon>
        <taxon>Embryophyta</taxon>
        <taxon>Anthocerotophyta</taxon>
        <taxon>Anthocerotopsida</taxon>
        <taxon>Anthocerotidae</taxon>
        <taxon>Anthocerotales</taxon>
        <taxon>Anthocerotaceae</taxon>
        <taxon>Anthoceros</taxon>
    </lineage>
</organism>
<geneLocation type="chloroplast"/>
<protein>
    <recommendedName>
        <fullName evidence="2">Cytochrome b6-f complex subunit 4</fullName>
    </recommendedName>
    <alternativeName>
        <fullName evidence="2">17 kDa polypeptide</fullName>
    </alternativeName>
</protein>
<feature type="chain" id="PRO_0000061845" description="Cytochrome b6-f complex subunit 4">
    <location>
        <begin position="1"/>
        <end position="160"/>
    </location>
</feature>
<feature type="transmembrane region" description="Helical" evidence="2">
    <location>
        <begin position="36"/>
        <end position="56"/>
    </location>
</feature>
<feature type="transmembrane region" description="Helical" evidence="2">
    <location>
        <begin position="95"/>
        <end position="115"/>
    </location>
</feature>
<feature type="transmembrane region" description="Helical" evidence="2">
    <location>
        <begin position="131"/>
        <end position="151"/>
    </location>
</feature>
<sequence>MGVTKKPDLSDPVLRAKLAKGMGHNYYGEPAWPNDLLYIFPVVILGTIACTVGLAVLEPSMIGEPANPFATPLEILPEWYFFPVFQILRTVPNKLLGVLLMAAVPAGLLTVPFLENVNKFQNPFRRPVATTIFLIGTAVAIWLGIGAALPIDKSLTLGLS</sequence>
<gene>
    <name evidence="2" type="primary">petD</name>
</gene>